<gene>
    <name evidence="5 6" type="primary">HIPP25</name>
    <name evidence="8" type="ordered locus">At4g35060</name>
    <name evidence="9" type="ORF">M4E13.120</name>
</gene>
<proteinExistence type="evidence at transcript level"/>
<sequence>MGVLDHVSEYFDCSHGSSKRHKSLQTVDVRVLIDCEGCERKVRRALEGMRGIRDVTIEPNAQKVTVVGYVEPNKVVARIIHRTGKRAELYPFVPYDVVAHPYASGVYDNRAPTGYVRNTEYDPHVSRLARASSTEVRYTTAFSDENASACVVM</sequence>
<organism>
    <name type="scientific">Arabidopsis thaliana</name>
    <name type="common">Mouse-ear cress</name>
    <dbReference type="NCBI Taxonomy" id="3702"/>
    <lineage>
        <taxon>Eukaryota</taxon>
        <taxon>Viridiplantae</taxon>
        <taxon>Streptophyta</taxon>
        <taxon>Embryophyta</taxon>
        <taxon>Tracheophyta</taxon>
        <taxon>Spermatophyta</taxon>
        <taxon>Magnoliopsida</taxon>
        <taxon>eudicotyledons</taxon>
        <taxon>Gunneridae</taxon>
        <taxon>Pentapetalae</taxon>
        <taxon>rosids</taxon>
        <taxon>malvids</taxon>
        <taxon>Brassicales</taxon>
        <taxon>Brassicaceae</taxon>
        <taxon>Camelineae</taxon>
        <taxon>Arabidopsis</taxon>
    </lineage>
</organism>
<feature type="chain" id="PRO_0000435861" description="Heavy metal-associated isoprenylated plant protein 25">
    <location>
        <begin position="1"/>
        <end position="150"/>
    </location>
</feature>
<feature type="propeptide" id="PRO_0000435862" description="Removed in mature form" evidence="7">
    <location>
        <begin position="151"/>
        <end position="153"/>
    </location>
</feature>
<feature type="domain" description="HMA" evidence="3">
    <location>
        <begin position="24"/>
        <end position="88"/>
    </location>
</feature>
<feature type="binding site" evidence="3">
    <location>
        <position position="35"/>
    </location>
    <ligand>
        <name>a metal cation</name>
        <dbReference type="ChEBI" id="CHEBI:25213"/>
    </ligand>
</feature>
<feature type="binding site" evidence="3">
    <location>
        <position position="38"/>
    </location>
    <ligand>
        <name>a metal cation</name>
        <dbReference type="ChEBI" id="CHEBI:25213"/>
    </ligand>
</feature>
<feature type="modified residue" description="Cysteine methyl ester" evidence="2">
    <location>
        <position position="150"/>
    </location>
</feature>
<feature type="lipid moiety-binding region" description="S-farnesyl cysteine" evidence="2">
    <location>
        <position position="150"/>
    </location>
</feature>
<feature type="sequence conflict" description="In Ref. 4; BAF00942." evidence="7" ref="4">
    <original>N</original>
    <variation>S</variation>
    <location>
        <position position="118"/>
    </location>
</feature>
<dbReference type="EMBL" id="AL022023">
    <property type="protein sequence ID" value="CAA17771.1"/>
    <property type="molecule type" value="Genomic_DNA"/>
</dbReference>
<dbReference type="EMBL" id="AL161586">
    <property type="protein sequence ID" value="CAB80223.1"/>
    <property type="molecule type" value="Genomic_DNA"/>
</dbReference>
<dbReference type="EMBL" id="CP002687">
    <property type="protein sequence ID" value="AEE86456.1"/>
    <property type="molecule type" value="Genomic_DNA"/>
</dbReference>
<dbReference type="EMBL" id="BT024822">
    <property type="protein sequence ID" value="ABD60705.1"/>
    <property type="molecule type" value="mRNA"/>
</dbReference>
<dbReference type="EMBL" id="AK229060">
    <property type="protein sequence ID" value="BAF00942.1"/>
    <property type="molecule type" value="mRNA"/>
</dbReference>
<dbReference type="EMBL" id="AY086639">
    <property type="protein sequence ID" value="AAM63697.1"/>
    <property type="molecule type" value="mRNA"/>
</dbReference>
<dbReference type="PIR" id="T05776">
    <property type="entry name" value="T05776"/>
</dbReference>
<dbReference type="RefSeq" id="NP_567975.1">
    <property type="nucleotide sequence ID" value="NM_119672.4"/>
</dbReference>
<dbReference type="SMR" id="O49613"/>
<dbReference type="FunCoup" id="O49613">
    <property type="interactions" value="47"/>
</dbReference>
<dbReference type="STRING" id="3702.O49613"/>
<dbReference type="iPTMnet" id="O49613"/>
<dbReference type="SwissPalm" id="O49613"/>
<dbReference type="PaxDb" id="3702-AT4G35060.1"/>
<dbReference type="ProteomicsDB" id="230391"/>
<dbReference type="DNASU" id="829658"/>
<dbReference type="EnsemblPlants" id="AT4G35060.1">
    <property type="protein sequence ID" value="AT4G35060.1"/>
    <property type="gene ID" value="AT4G35060"/>
</dbReference>
<dbReference type="GeneID" id="829658"/>
<dbReference type="Gramene" id="AT4G35060.1">
    <property type="protein sequence ID" value="AT4G35060.1"/>
    <property type="gene ID" value="AT4G35060"/>
</dbReference>
<dbReference type="KEGG" id="ath:AT4G35060"/>
<dbReference type="Araport" id="AT4G35060"/>
<dbReference type="TAIR" id="AT4G35060">
    <property type="gene designation" value="HIPP25"/>
</dbReference>
<dbReference type="eggNOG" id="KOG1603">
    <property type="taxonomic scope" value="Eukaryota"/>
</dbReference>
<dbReference type="HOGENOM" id="CLU_100095_1_0_1"/>
<dbReference type="InParanoid" id="O49613"/>
<dbReference type="OMA" id="XSTEARY"/>
<dbReference type="PhylomeDB" id="O49613"/>
<dbReference type="PRO" id="PR:O49613"/>
<dbReference type="Proteomes" id="UP000006548">
    <property type="component" value="Chromosome 4"/>
</dbReference>
<dbReference type="ExpressionAtlas" id="O49613">
    <property type="expression patterns" value="baseline and differential"/>
</dbReference>
<dbReference type="GO" id="GO:0016020">
    <property type="term" value="C:membrane"/>
    <property type="evidence" value="ECO:0007669"/>
    <property type="project" value="UniProtKB-SubCell"/>
</dbReference>
<dbReference type="GO" id="GO:0009506">
    <property type="term" value="C:plasmodesma"/>
    <property type="evidence" value="ECO:0007005"/>
    <property type="project" value="TAIR"/>
</dbReference>
<dbReference type="GO" id="GO:0046872">
    <property type="term" value="F:metal ion binding"/>
    <property type="evidence" value="ECO:0007669"/>
    <property type="project" value="UniProtKB-KW"/>
</dbReference>
<dbReference type="CDD" id="cd00371">
    <property type="entry name" value="HMA"/>
    <property type="match status" value="1"/>
</dbReference>
<dbReference type="FunFam" id="3.30.70.100:FF:000035">
    <property type="entry name" value="Heavy metal-associated isoprenylated plant protein 26"/>
    <property type="match status" value="1"/>
</dbReference>
<dbReference type="Gene3D" id="3.30.70.100">
    <property type="match status" value="1"/>
</dbReference>
<dbReference type="InterPro" id="IPR006121">
    <property type="entry name" value="HMA_dom"/>
</dbReference>
<dbReference type="InterPro" id="IPR036163">
    <property type="entry name" value="HMA_dom_sf"/>
</dbReference>
<dbReference type="PANTHER" id="PTHR22814">
    <property type="entry name" value="COPPER TRANSPORT PROTEIN ATOX1-RELATED"/>
    <property type="match status" value="1"/>
</dbReference>
<dbReference type="PANTHER" id="PTHR22814:SF318">
    <property type="entry name" value="HEAVY METAL-ASSOCIATED ISOPRENYLATED PLANT PROTEIN 25"/>
    <property type="match status" value="1"/>
</dbReference>
<dbReference type="Pfam" id="PF00403">
    <property type="entry name" value="HMA"/>
    <property type="match status" value="1"/>
</dbReference>
<dbReference type="SUPFAM" id="SSF55008">
    <property type="entry name" value="HMA, heavy metal-associated domain"/>
    <property type="match status" value="1"/>
</dbReference>
<dbReference type="PROSITE" id="PS50846">
    <property type="entry name" value="HMA_2"/>
    <property type="match status" value="1"/>
</dbReference>
<name>HIP25_ARATH</name>
<protein>
    <recommendedName>
        <fullName evidence="5 6">Heavy metal-associated isoprenylated plant protein 25</fullName>
        <shortName evidence="6">AtHIP25</shortName>
        <shortName evidence="5 6">AtHIPP25</shortName>
    </recommendedName>
</protein>
<keyword id="KW-0104">Cadmium</keyword>
<keyword id="KW-0449">Lipoprotein</keyword>
<keyword id="KW-0472">Membrane</keyword>
<keyword id="KW-0479">Metal-binding</keyword>
<keyword id="KW-0488">Methylation</keyword>
<keyword id="KW-0636">Prenylation</keyword>
<keyword id="KW-1185">Reference proteome</keyword>
<comment type="function">
    <text evidence="1">Heavy-metal-binding protein. Binds cadmium. May be involved in cadmium transport and play a role in cadmium detoxification.</text>
</comment>
<comment type="subcellular location">
    <subcellularLocation>
        <location evidence="2">Membrane</location>
    </subcellularLocation>
</comment>
<comment type="tissue specificity">
    <text evidence="4">Expressed in roots, shoot apical meristem, trichomes and flower buds.</text>
</comment>
<comment type="similarity">
    <text evidence="7">Belongs to the HIPP family.</text>
</comment>
<accession>O49613</accession>
<accession>Q0WPK7</accession>
<reference key="1">
    <citation type="journal article" date="1999" name="Nature">
        <title>Sequence and analysis of chromosome 4 of the plant Arabidopsis thaliana.</title>
        <authorList>
            <person name="Mayer K.F.X."/>
            <person name="Schueller C."/>
            <person name="Wambutt R."/>
            <person name="Murphy G."/>
            <person name="Volckaert G."/>
            <person name="Pohl T."/>
            <person name="Duesterhoeft A."/>
            <person name="Stiekema W."/>
            <person name="Entian K.-D."/>
            <person name="Terryn N."/>
            <person name="Harris B."/>
            <person name="Ansorge W."/>
            <person name="Brandt P."/>
            <person name="Grivell L.A."/>
            <person name="Rieger M."/>
            <person name="Weichselgartner M."/>
            <person name="de Simone V."/>
            <person name="Obermaier B."/>
            <person name="Mache R."/>
            <person name="Mueller M."/>
            <person name="Kreis M."/>
            <person name="Delseny M."/>
            <person name="Puigdomenech P."/>
            <person name="Watson M."/>
            <person name="Schmidtheini T."/>
            <person name="Reichert B."/>
            <person name="Portetelle D."/>
            <person name="Perez-Alonso M."/>
            <person name="Boutry M."/>
            <person name="Bancroft I."/>
            <person name="Vos P."/>
            <person name="Hoheisel J."/>
            <person name="Zimmermann W."/>
            <person name="Wedler H."/>
            <person name="Ridley P."/>
            <person name="Langham S.-A."/>
            <person name="McCullagh B."/>
            <person name="Bilham L."/>
            <person name="Robben J."/>
            <person name="van der Schueren J."/>
            <person name="Grymonprez B."/>
            <person name="Chuang Y.-J."/>
            <person name="Vandenbussche F."/>
            <person name="Braeken M."/>
            <person name="Weltjens I."/>
            <person name="Voet M."/>
            <person name="Bastiaens I."/>
            <person name="Aert R."/>
            <person name="Defoor E."/>
            <person name="Weitzenegger T."/>
            <person name="Bothe G."/>
            <person name="Ramsperger U."/>
            <person name="Hilbert H."/>
            <person name="Braun M."/>
            <person name="Holzer E."/>
            <person name="Brandt A."/>
            <person name="Peters S."/>
            <person name="van Staveren M."/>
            <person name="Dirkse W."/>
            <person name="Mooijman P."/>
            <person name="Klein Lankhorst R."/>
            <person name="Rose M."/>
            <person name="Hauf J."/>
            <person name="Koetter P."/>
            <person name="Berneiser S."/>
            <person name="Hempel S."/>
            <person name="Feldpausch M."/>
            <person name="Lamberth S."/>
            <person name="Van den Daele H."/>
            <person name="De Keyser A."/>
            <person name="Buysshaert C."/>
            <person name="Gielen J."/>
            <person name="Villarroel R."/>
            <person name="De Clercq R."/>
            <person name="van Montagu M."/>
            <person name="Rogers J."/>
            <person name="Cronin A."/>
            <person name="Quail M.A."/>
            <person name="Bray-Allen S."/>
            <person name="Clark L."/>
            <person name="Doggett J."/>
            <person name="Hall S."/>
            <person name="Kay M."/>
            <person name="Lennard N."/>
            <person name="McLay K."/>
            <person name="Mayes R."/>
            <person name="Pettett A."/>
            <person name="Rajandream M.A."/>
            <person name="Lyne M."/>
            <person name="Benes V."/>
            <person name="Rechmann S."/>
            <person name="Borkova D."/>
            <person name="Bloecker H."/>
            <person name="Scharfe M."/>
            <person name="Grimm M."/>
            <person name="Loehnert T.-H."/>
            <person name="Dose S."/>
            <person name="de Haan M."/>
            <person name="Maarse A.C."/>
            <person name="Schaefer M."/>
            <person name="Mueller-Auer S."/>
            <person name="Gabel C."/>
            <person name="Fuchs M."/>
            <person name="Fartmann B."/>
            <person name="Granderath K."/>
            <person name="Dauner D."/>
            <person name="Herzl A."/>
            <person name="Neumann S."/>
            <person name="Argiriou A."/>
            <person name="Vitale D."/>
            <person name="Liguori R."/>
            <person name="Piravandi E."/>
            <person name="Massenet O."/>
            <person name="Quigley F."/>
            <person name="Clabauld G."/>
            <person name="Muendlein A."/>
            <person name="Felber R."/>
            <person name="Schnabl S."/>
            <person name="Hiller R."/>
            <person name="Schmidt W."/>
            <person name="Lecharny A."/>
            <person name="Aubourg S."/>
            <person name="Chefdor F."/>
            <person name="Cooke R."/>
            <person name="Berger C."/>
            <person name="Monfort A."/>
            <person name="Casacuberta E."/>
            <person name="Gibbons T."/>
            <person name="Weber N."/>
            <person name="Vandenbol M."/>
            <person name="Bargues M."/>
            <person name="Terol J."/>
            <person name="Torres A."/>
            <person name="Perez-Perez A."/>
            <person name="Purnelle B."/>
            <person name="Bent E."/>
            <person name="Johnson S."/>
            <person name="Tacon D."/>
            <person name="Jesse T."/>
            <person name="Heijnen L."/>
            <person name="Schwarz S."/>
            <person name="Scholler P."/>
            <person name="Heber S."/>
            <person name="Francs P."/>
            <person name="Bielke C."/>
            <person name="Frishman D."/>
            <person name="Haase D."/>
            <person name="Lemcke K."/>
            <person name="Mewes H.-W."/>
            <person name="Stocker S."/>
            <person name="Zaccaria P."/>
            <person name="Bevan M."/>
            <person name="Wilson R.K."/>
            <person name="de la Bastide M."/>
            <person name="Habermann K."/>
            <person name="Parnell L."/>
            <person name="Dedhia N."/>
            <person name="Gnoj L."/>
            <person name="Schutz K."/>
            <person name="Huang E."/>
            <person name="Spiegel L."/>
            <person name="Sekhon M."/>
            <person name="Murray J."/>
            <person name="Sheet P."/>
            <person name="Cordes M."/>
            <person name="Abu-Threideh J."/>
            <person name="Stoneking T."/>
            <person name="Kalicki J."/>
            <person name="Graves T."/>
            <person name="Harmon G."/>
            <person name="Edwards J."/>
            <person name="Latreille P."/>
            <person name="Courtney L."/>
            <person name="Cloud J."/>
            <person name="Abbott A."/>
            <person name="Scott K."/>
            <person name="Johnson D."/>
            <person name="Minx P."/>
            <person name="Bentley D."/>
            <person name="Fulton B."/>
            <person name="Miller N."/>
            <person name="Greco T."/>
            <person name="Kemp K."/>
            <person name="Kramer J."/>
            <person name="Fulton L."/>
            <person name="Mardis E."/>
            <person name="Dante M."/>
            <person name="Pepin K."/>
            <person name="Hillier L.W."/>
            <person name="Nelson J."/>
            <person name="Spieth J."/>
            <person name="Ryan E."/>
            <person name="Andrews S."/>
            <person name="Geisel C."/>
            <person name="Layman D."/>
            <person name="Du H."/>
            <person name="Ali J."/>
            <person name="Berghoff A."/>
            <person name="Jones K."/>
            <person name="Drone K."/>
            <person name="Cotton M."/>
            <person name="Joshu C."/>
            <person name="Antonoiu B."/>
            <person name="Zidanic M."/>
            <person name="Strong C."/>
            <person name="Sun H."/>
            <person name="Lamar B."/>
            <person name="Yordan C."/>
            <person name="Ma P."/>
            <person name="Zhong J."/>
            <person name="Preston R."/>
            <person name="Vil D."/>
            <person name="Shekher M."/>
            <person name="Matero A."/>
            <person name="Shah R."/>
            <person name="Swaby I.K."/>
            <person name="O'Shaughnessy A."/>
            <person name="Rodriguez M."/>
            <person name="Hoffman J."/>
            <person name="Till S."/>
            <person name="Granat S."/>
            <person name="Shohdy N."/>
            <person name="Hasegawa A."/>
            <person name="Hameed A."/>
            <person name="Lodhi M."/>
            <person name="Johnson A."/>
            <person name="Chen E."/>
            <person name="Marra M.A."/>
            <person name="Martienssen R."/>
            <person name="McCombie W.R."/>
        </authorList>
    </citation>
    <scope>NUCLEOTIDE SEQUENCE [LARGE SCALE GENOMIC DNA]</scope>
    <source>
        <strain>cv. Columbia</strain>
    </source>
</reference>
<reference key="2">
    <citation type="journal article" date="2017" name="Plant J.">
        <title>Araport11: a complete reannotation of the Arabidopsis thaliana reference genome.</title>
        <authorList>
            <person name="Cheng C.Y."/>
            <person name="Krishnakumar V."/>
            <person name="Chan A.P."/>
            <person name="Thibaud-Nissen F."/>
            <person name="Schobel S."/>
            <person name="Town C.D."/>
        </authorList>
    </citation>
    <scope>GENOME REANNOTATION</scope>
    <source>
        <strain>cv. Columbia</strain>
    </source>
</reference>
<reference key="3">
    <citation type="submission" date="2006-03" db="EMBL/GenBank/DDBJ databases">
        <title>Arabidopsis ORF clones.</title>
        <authorList>
            <person name="Kim C.J."/>
            <person name="Chen H."/>
            <person name="Shinn P."/>
            <person name="Ecker J.R."/>
        </authorList>
    </citation>
    <scope>NUCLEOTIDE SEQUENCE [LARGE SCALE MRNA]</scope>
</reference>
<reference key="4">
    <citation type="submission" date="2006-07" db="EMBL/GenBank/DDBJ databases">
        <title>Large-scale analysis of RIKEN Arabidopsis full-length (RAFL) cDNAs.</title>
        <authorList>
            <person name="Totoki Y."/>
            <person name="Seki M."/>
            <person name="Ishida J."/>
            <person name="Nakajima M."/>
            <person name="Enju A."/>
            <person name="Kamiya A."/>
            <person name="Narusaka M."/>
            <person name="Shin-i T."/>
            <person name="Nakagawa M."/>
            <person name="Sakamoto N."/>
            <person name="Oishi K."/>
            <person name="Kohara Y."/>
            <person name="Kobayashi M."/>
            <person name="Toyoda A."/>
            <person name="Sakaki Y."/>
            <person name="Sakurai T."/>
            <person name="Iida K."/>
            <person name="Akiyama K."/>
            <person name="Satou M."/>
            <person name="Toyoda T."/>
            <person name="Konagaya A."/>
            <person name="Carninci P."/>
            <person name="Kawai J."/>
            <person name="Hayashizaki Y."/>
            <person name="Shinozaki K."/>
        </authorList>
    </citation>
    <scope>NUCLEOTIDE SEQUENCE [LARGE SCALE MRNA]</scope>
    <source>
        <strain>cv. Columbia</strain>
    </source>
</reference>
<reference key="5">
    <citation type="submission" date="2002-03" db="EMBL/GenBank/DDBJ databases">
        <title>Full-length cDNA from Arabidopsis thaliana.</title>
        <authorList>
            <person name="Brover V.V."/>
            <person name="Troukhan M.E."/>
            <person name="Alexandrov N.A."/>
            <person name="Lu Y.-P."/>
            <person name="Flavell R.B."/>
            <person name="Feldmann K.A."/>
        </authorList>
    </citation>
    <scope>NUCLEOTIDE SEQUENCE [LARGE SCALE MRNA]</scope>
</reference>
<reference key="6">
    <citation type="journal article" date="2010" name="Metallomics">
        <title>Metallochaperone-like genes in Arabidopsis thaliana.</title>
        <authorList>
            <person name="Tehseen M."/>
            <person name="Cairns N."/>
            <person name="Sherson S."/>
            <person name="Cobbett C.S."/>
        </authorList>
    </citation>
    <scope>TISSUE SPECIFICITY</scope>
    <scope>NOMENCLATURE</scope>
    <scope>GENE FAMILY</scope>
</reference>
<reference key="7">
    <citation type="journal article" date="2013" name="FEBS J.">
        <title>Heavy metal-associated isoprenylated plant protein (HIPP): characterization of a family of proteins exclusive to plants.</title>
        <authorList>
            <person name="de Abreu-Neto J.B."/>
            <person name="Turchetto-Zolet A.C."/>
            <person name="de Oliveira L.F."/>
            <person name="Zanettini M.H."/>
            <person name="Margis-Pinheiro M."/>
        </authorList>
    </citation>
    <scope>GENE FAMILY</scope>
    <scope>NOMENCLATURE</scope>
</reference>
<evidence type="ECO:0000250" key="1">
    <source>
        <dbReference type="UniProtKB" id="Q9C9A3"/>
    </source>
</evidence>
<evidence type="ECO:0000250" key="2">
    <source>
        <dbReference type="UniProtKB" id="Q9SZN7"/>
    </source>
</evidence>
<evidence type="ECO:0000255" key="3">
    <source>
        <dbReference type="PROSITE-ProRule" id="PRU00280"/>
    </source>
</evidence>
<evidence type="ECO:0000269" key="4">
    <source>
    </source>
</evidence>
<evidence type="ECO:0000303" key="5">
    <source>
    </source>
</evidence>
<evidence type="ECO:0000303" key="6">
    <source>
    </source>
</evidence>
<evidence type="ECO:0000305" key="7"/>
<evidence type="ECO:0000312" key="8">
    <source>
        <dbReference type="Araport" id="AT4G35060"/>
    </source>
</evidence>
<evidence type="ECO:0000312" key="9">
    <source>
        <dbReference type="EMBL" id="CAA17771.1"/>
    </source>
</evidence>